<gene>
    <name evidence="1" type="primary">rplQ</name>
    <name type="ordered locus">WD_0657</name>
</gene>
<protein>
    <recommendedName>
        <fullName evidence="1">Large ribosomal subunit protein bL17</fullName>
    </recommendedName>
    <alternativeName>
        <fullName evidence="2">50S ribosomal protein L17</fullName>
    </alternativeName>
</protein>
<organism>
    <name type="scientific">Wolbachia pipientis wMel</name>
    <dbReference type="NCBI Taxonomy" id="163164"/>
    <lineage>
        <taxon>Bacteria</taxon>
        <taxon>Pseudomonadati</taxon>
        <taxon>Pseudomonadota</taxon>
        <taxon>Alphaproteobacteria</taxon>
        <taxon>Rickettsiales</taxon>
        <taxon>Anaplasmataceae</taxon>
        <taxon>Wolbachieae</taxon>
        <taxon>Wolbachia</taxon>
    </lineage>
</organism>
<proteinExistence type="inferred from homology"/>
<feature type="chain" id="PRO_1000055992" description="Large ribosomal subunit protein bL17">
    <location>
        <begin position="1"/>
        <end position="142"/>
    </location>
</feature>
<sequence>MKHGIKKRKLSRCTEHRLSTLKNLSISLINHEQIVTTLPKAKELRPYVEKFITIAKNKNTLHGRRLLLSRLHNSKLAVDKLLNVLASRYQDRKGGYSRIIKFSTRKGDCASMAVIELVDRDIAARGKVYSKNKEGGKVVTQS</sequence>
<dbReference type="EMBL" id="AE017196">
    <property type="protein sequence ID" value="AAS14355.1"/>
    <property type="molecule type" value="Genomic_DNA"/>
</dbReference>
<dbReference type="RefSeq" id="WP_007550873.1">
    <property type="nucleotide sequence ID" value="NZ_OX384529.1"/>
</dbReference>
<dbReference type="SMR" id="Q73HB0"/>
<dbReference type="EnsemblBacteria" id="AAS14355">
    <property type="protein sequence ID" value="AAS14355"/>
    <property type="gene ID" value="WD_0657"/>
</dbReference>
<dbReference type="GeneID" id="70036140"/>
<dbReference type="KEGG" id="wol:WD_0657"/>
<dbReference type="eggNOG" id="COG0203">
    <property type="taxonomic scope" value="Bacteria"/>
</dbReference>
<dbReference type="Proteomes" id="UP000008215">
    <property type="component" value="Chromosome"/>
</dbReference>
<dbReference type="GO" id="GO:0022625">
    <property type="term" value="C:cytosolic large ribosomal subunit"/>
    <property type="evidence" value="ECO:0007669"/>
    <property type="project" value="TreeGrafter"/>
</dbReference>
<dbReference type="GO" id="GO:0003735">
    <property type="term" value="F:structural constituent of ribosome"/>
    <property type="evidence" value="ECO:0007669"/>
    <property type="project" value="InterPro"/>
</dbReference>
<dbReference type="GO" id="GO:0006412">
    <property type="term" value="P:translation"/>
    <property type="evidence" value="ECO:0007669"/>
    <property type="project" value="UniProtKB-UniRule"/>
</dbReference>
<dbReference type="Gene3D" id="3.90.1030.10">
    <property type="entry name" value="Ribosomal protein L17"/>
    <property type="match status" value="1"/>
</dbReference>
<dbReference type="HAMAP" id="MF_01368">
    <property type="entry name" value="Ribosomal_bL17"/>
    <property type="match status" value="1"/>
</dbReference>
<dbReference type="InterPro" id="IPR000456">
    <property type="entry name" value="Ribosomal_bL17"/>
</dbReference>
<dbReference type="InterPro" id="IPR036373">
    <property type="entry name" value="Ribosomal_bL17_sf"/>
</dbReference>
<dbReference type="NCBIfam" id="TIGR00059">
    <property type="entry name" value="L17"/>
    <property type="match status" value="1"/>
</dbReference>
<dbReference type="PANTHER" id="PTHR14413:SF16">
    <property type="entry name" value="LARGE RIBOSOMAL SUBUNIT PROTEIN BL17M"/>
    <property type="match status" value="1"/>
</dbReference>
<dbReference type="PANTHER" id="PTHR14413">
    <property type="entry name" value="RIBOSOMAL PROTEIN L17"/>
    <property type="match status" value="1"/>
</dbReference>
<dbReference type="Pfam" id="PF01196">
    <property type="entry name" value="Ribosomal_L17"/>
    <property type="match status" value="1"/>
</dbReference>
<dbReference type="SUPFAM" id="SSF64263">
    <property type="entry name" value="Prokaryotic ribosomal protein L17"/>
    <property type="match status" value="1"/>
</dbReference>
<evidence type="ECO:0000255" key="1">
    <source>
        <dbReference type="HAMAP-Rule" id="MF_01368"/>
    </source>
</evidence>
<evidence type="ECO:0000305" key="2"/>
<name>RL17_WOLPM</name>
<accession>Q73HB0</accession>
<comment type="subunit">
    <text evidence="1">Part of the 50S ribosomal subunit. Contacts protein L32.</text>
</comment>
<comment type="similarity">
    <text evidence="1">Belongs to the bacterial ribosomal protein bL17 family.</text>
</comment>
<reference key="1">
    <citation type="journal article" date="2004" name="PLoS Biol.">
        <title>Phylogenomics of the reproductive parasite Wolbachia pipientis wMel: a streamlined genome overrun by mobile genetic elements.</title>
        <authorList>
            <person name="Wu M."/>
            <person name="Sun L.V."/>
            <person name="Vamathevan J.J."/>
            <person name="Riegler M."/>
            <person name="DeBoy R.T."/>
            <person name="Brownlie J.C."/>
            <person name="McGraw E.A."/>
            <person name="Martin W."/>
            <person name="Esser C."/>
            <person name="Ahmadinejad N."/>
            <person name="Wiegand C."/>
            <person name="Madupu R."/>
            <person name="Beanan M.J."/>
            <person name="Brinkac L.M."/>
            <person name="Daugherty S.C."/>
            <person name="Durkin A.S."/>
            <person name="Kolonay J.F."/>
            <person name="Nelson W.C."/>
            <person name="Mohamoud Y."/>
            <person name="Lee P."/>
            <person name="Berry K.J."/>
            <person name="Young M.B."/>
            <person name="Utterback T.R."/>
            <person name="Weidman J.F."/>
            <person name="Nierman W.C."/>
            <person name="Paulsen I.T."/>
            <person name="Nelson K.E."/>
            <person name="Tettelin H."/>
            <person name="O'Neill S.L."/>
            <person name="Eisen J.A."/>
        </authorList>
    </citation>
    <scope>NUCLEOTIDE SEQUENCE [LARGE SCALE GENOMIC DNA]</scope>
</reference>
<keyword id="KW-0687">Ribonucleoprotein</keyword>
<keyword id="KW-0689">Ribosomal protein</keyword>